<evidence type="ECO:0000250" key="1"/>
<evidence type="ECO:0000305" key="2"/>
<name>SCOP_STUST</name>
<proteinExistence type="inferred from homology"/>
<reference key="1">
    <citation type="submission" date="2002-09" db="EMBL/GenBank/DDBJ databases">
        <authorList>
            <person name="Zumft W.G."/>
        </authorList>
    </citation>
    <scope>NUCLEOTIDE SEQUENCE [GENOMIC DNA]</scope>
    <source>
        <strain>ATCC 14405 / JCM 20778 / CIP 107696 / IAM 12931 / LMG 2243 / NCIMB 568 / Baumann 218 / ZoBell 632</strain>
    </source>
</reference>
<reference key="2">
    <citation type="journal article" date="1993" name="J. Bacteriol.">
        <title>Anaerobic control of denitrification in Pseudomonas stutzeri escapes mutagenesis of an fnr-like gene.</title>
        <authorList>
            <person name="Cuypers H."/>
            <person name="Zumft W.G."/>
        </authorList>
    </citation>
    <scope>NUCLEOTIDE SEQUENCE [GENOMIC DNA] OF 1-193</scope>
    <source>
        <strain>ATCC 14405 / JCM 20778 / CIP 107696 / IAM 12931 / LMG 2243 / NCIMB 568 / Baumann 218 / ZoBell 632</strain>
    </source>
</reference>
<organism>
    <name type="scientific">Stutzerimonas stutzeri</name>
    <name type="common">Pseudomonas stutzeri</name>
    <dbReference type="NCBI Taxonomy" id="316"/>
    <lineage>
        <taxon>Bacteria</taxon>
        <taxon>Pseudomonadati</taxon>
        <taxon>Pseudomonadota</taxon>
        <taxon>Gammaproteobacteria</taxon>
        <taxon>Pseudomonadales</taxon>
        <taxon>Pseudomonadaceae</taxon>
        <taxon>Stutzerimonas</taxon>
    </lineage>
</organism>
<sequence length="204" mass="22715">MPVLNTLRRSLLILALACTLPSLAMDRNALLDQANVLLLPRERAIPQLELVDQNDQPFSTETLKGRWHILFFGFTACPDICPTTLSEMRRLFGQLPAETREQLQLVLITADPARDTPQQLKTYLSYYRAGFIGLTGNMEQLQRLSKALGLPFVPATETEGDYSVSHSGNLALVGPDGSLRGHIRAPLKLDGLQRVLPQILDNER</sequence>
<keyword id="KW-0186">Copper</keyword>
<keyword id="KW-0479">Metal-binding</keyword>
<accession>P47206</accession>
<gene>
    <name type="primary">scoP</name>
</gene>
<dbReference type="EMBL" id="Z26044">
    <property type="protein sequence ID" value="CAA81131.2"/>
    <property type="molecule type" value="Genomic_DNA"/>
</dbReference>
<dbReference type="PIR" id="C49927">
    <property type="entry name" value="C49927"/>
</dbReference>
<dbReference type="RefSeq" id="WP_003285351.1">
    <property type="nucleotide sequence ID" value="NZ_CP036186.1"/>
</dbReference>
<dbReference type="SMR" id="P47206"/>
<dbReference type="GO" id="GO:0046872">
    <property type="term" value="F:metal ion binding"/>
    <property type="evidence" value="ECO:0007669"/>
    <property type="project" value="UniProtKB-KW"/>
</dbReference>
<dbReference type="CDD" id="cd02968">
    <property type="entry name" value="SCO"/>
    <property type="match status" value="1"/>
</dbReference>
<dbReference type="Gene3D" id="3.40.30.10">
    <property type="entry name" value="Glutaredoxin"/>
    <property type="match status" value="1"/>
</dbReference>
<dbReference type="InterPro" id="IPR003782">
    <property type="entry name" value="SCO1/SenC"/>
</dbReference>
<dbReference type="InterPro" id="IPR036249">
    <property type="entry name" value="Thioredoxin-like_sf"/>
</dbReference>
<dbReference type="PANTHER" id="PTHR12151">
    <property type="entry name" value="ELECTRON TRANSPORT PROTIN SCO1/SENC FAMILY MEMBER"/>
    <property type="match status" value="1"/>
</dbReference>
<dbReference type="PANTHER" id="PTHR12151:SF25">
    <property type="entry name" value="LINALOOL DEHYDRATASE_ISOMERASE DOMAIN-CONTAINING PROTEIN"/>
    <property type="match status" value="1"/>
</dbReference>
<dbReference type="Pfam" id="PF02630">
    <property type="entry name" value="SCO1-SenC"/>
    <property type="match status" value="1"/>
</dbReference>
<dbReference type="SUPFAM" id="SSF52833">
    <property type="entry name" value="Thioredoxin-like"/>
    <property type="match status" value="1"/>
</dbReference>
<feature type="chain" id="PRO_0000173876" description="Putative copper-binding protein">
    <location>
        <begin position="1"/>
        <end position="204"/>
    </location>
</feature>
<feature type="binding site" evidence="1">
    <location>
        <position position="77"/>
    </location>
    <ligand>
        <name>Cu cation</name>
        <dbReference type="ChEBI" id="CHEBI:23378"/>
    </ligand>
</feature>
<feature type="binding site" evidence="1">
    <location>
        <position position="81"/>
    </location>
    <ligand>
        <name>Cu cation</name>
        <dbReference type="ChEBI" id="CHEBI:23378"/>
    </ligand>
</feature>
<feature type="binding site" evidence="1">
    <location>
        <position position="166"/>
    </location>
    <ligand>
        <name>Cu cation</name>
        <dbReference type="ChEBI" id="CHEBI:23378"/>
    </ligand>
</feature>
<comment type="similarity">
    <text evidence="2">Belongs to the SCO1/2 family.</text>
</comment>
<protein>
    <recommendedName>
        <fullName>Putative copper-binding protein</fullName>
    </recommendedName>
</protein>